<name>RSKA_MYCSK</name>
<dbReference type="EMBL" id="CP000518">
    <property type="protein sequence ID" value="ABL93650.1"/>
    <property type="molecule type" value="Genomic_DNA"/>
</dbReference>
<dbReference type="SMR" id="A1ULE2"/>
<dbReference type="STRING" id="189918.Mkms_4459"/>
<dbReference type="KEGG" id="mkm:Mkms_4459"/>
<dbReference type="HOGENOM" id="CLU_075802_1_1_11"/>
<dbReference type="OrthoDB" id="153510at2"/>
<dbReference type="GO" id="GO:0005886">
    <property type="term" value="C:plasma membrane"/>
    <property type="evidence" value="ECO:0007669"/>
    <property type="project" value="UniProtKB-SubCell"/>
</dbReference>
<dbReference type="GO" id="GO:0016989">
    <property type="term" value="F:sigma factor antagonist activity"/>
    <property type="evidence" value="ECO:0007669"/>
    <property type="project" value="TreeGrafter"/>
</dbReference>
<dbReference type="GO" id="GO:0006417">
    <property type="term" value="P:regulation of translation"/>
    <property type="evidence" value="ECO:0007669"/>
    <property type="project" value="TreeGrafter"/>
</dbReference>
<dbReference type="Gene3D" id="1.10.10.1320">
    <property type="entry name" value="Anti-sigma factor, zinc-finger domain"/>
    <property type="match status" value="1"/>
</dbReference>
<dbReference type="InterPro" id="IPR051474">
    <property type="entry name" value="Anti-sigma-K/W_factor"/>
</dbReference>
<dbReference type="InterPro" id="IPR041916">
    <property type="entry name" value="Anti_sigma_zinc_sf"/>
</dbReference>
<dbReference type="InterPro" id="IPR018764">
    <property type="entry name" value="RskA_C"/>
</dbReference>
<dbReference type="InterPro" id="IPR053877">
    <property type="entry name" value="RskA_N"/>
</dbReference>
<dbReference type="PANTHER" id="PTHR37461">
    <property type="entry name" value="ANTI-SIGMA-K FACTOR RSKA"/>
    <property type="match status" value="1"/>
</dbReference>
<dbReference type="PANTHER" id="PTHR37461:SF1">
    <property type="entry name" value="ANTI-SIGMA-K FACTOR RSKA"/>
    <property type="match status" value="1"/>
</dbReference>
<dbReference type="Pfam" id="PF10099">
    <property type="entry name" value="RskA_C"/>
    <property type="match status" value="1"/>
</dbReference>
<dbReference type="Pfam" id="PF22618">
    <property type="entry name" value="RskA_N"/>
    <property type="match status" value="1"/>
</dbReference>
<keyword id="KW-1003">Cell membrane</keyword>
<keyword id="KW-0472">Membrane</keyword>
<keyword id="KW-0804">Transcription</keyword>
<keyword id="KW-0805">Transcription regulation</keyword>
<keyword id="KW-0812">Transmembrane</keyword>
<keyword id="KW-1133">Transmembrane helix</keyword>
<proteinExistence type="inferred from homology"/>
<gene>
    <name type="primary">rskA</name>
    <name type="ordered locus">Mkms_4459</name>
</gene>
<sequence length="243" mass="25147">MTEPNNTDLLDLATPYALHAVSIDERFEIDRWLATAPPEVADAFTDEVRSVQETMAVLSAATATEPPAHLRDNVLAMVADDPVRDLGSARRRRGGESRWRTAVLAAAAVAVVGLGALGVGLALRPAVSPTTADQVFAAPDVQTVSGPIPGGGTATVVFSKERDAGVLVMNDVAPPKPGTVYQMWLVGSDGPHSAGTMDDKAISPSTTAVLSDIGTSQALAFTVEPPGGSQRPTSPAFAELPLT</sequence>
<feature type="chain" id="PRO_0000313833" description="Anti-sigma-K factor RskA">
    <location>
        <begin position="1"/>
        <end position="243"/>
    </location>
</feature>
<feature type="topological domain" description="Cytoplasmic" evidence="2">
    <location>
        <begin position="1"/>
        <end position="102"/>
    </location>
</feature>
<feature type="transmembrane region" description="Helical" evidence="2">
    <location>
        <begin position="103"/>
        <end position="123"/>
    </location>
</feature>
<feature type="topological domain" description="Extracellular" evidence="2">
    <location>
        <begin position="124"/>
        <end position="243"/>
    </location>
</feature>
<feature type="region of interest" description="Disordered" evidence="3">
    <location>
        <begin position="223"/>
        <end position="243"/>
    </location>
</feature>
<reference key="1">
    <citation type="submission" date="2006-12" db="EMBL/GenBank/DDBJ databases">
        <title>Complete sequence of chromosome of Mycobacterium sp. KMS.</title>
        <authorList>
            <consortium name="US DOE Joint Genome Institute"/>
            <person name="Copeland A."/>
            <person name="Lucas S."/>
            <person name="Lapidus A."/>
            <person name="Barry K."/>
            <person name="Detter J.C."/>
            <person name="Glavina del Rio T."/>
            <person name="Hammon N."/>
            <person name="Israni S."/>
            <person name="Dalin E."/>
            <person name="Tice H."/>
            <person name="Pitluck S."/>
            <person name="Kiss H."/>
            <person name="Brettin T."/>
            <person name="Bruce D."/>
            <person name="Han C."/>
            <person name="Tapia R."/>
            <person name="Gilna P."/>
            <person name="Schmutz J."/>
            <person name="Larimer F."/>
            <person name="Land M."/>
            <person name="Hauser L."/>
            <person name="Kyrpides N."/>
            <person name="Mikhailova N."/>
            <person name="Miller C.D."/>
            <person name="Richardson P."/>
        </authorList>
    </citation>
    <scope>NUCLEOTIDE SEQUENCE [LARGE SCALE GENOMIC DNA]</scope>
    <source>
        <strain>KMS</strain>
    </source>
</reference>
<organism>
    <name type="scientific">Mycobacterium sp. (strain KMS)</name>
    <dbReference type="NCBI Taxonomy" id="189918"/>
    <lineage>
        <taxon>Bacteria</taxon>
        <taxon>Bacillati</taxon>
        <taxon>Actinomycetota</taxon>
        <taxon>Actinomycetes</taxon>
        <taxon>Mycobacteriales</taxon>
        <taxon>Mycobacteriaceae</taxon>
        <taxon>Mycobacterium</taxon>
    </lineage>
</organism>
<evidence type="ECO:0000250" key="1"/>
<evidence type="ECO:0000255" key="2"/>
<evidence type="ECO:0000256" key="3">
    <source>
        <dbReference type="SAM" id="MobiDB-lite"/>
    </source>
</evidence>
<evidence type="ECO:0000305" key="4"/>
<accession>A1ULE2</accession>
<comment type="function">
    <text evidence="1">An anti-sigma factor for extracytoplasmic function (ECF) sigma factor SigK. ECF sigma factors are held in an inactive form by an anti-sigma factor until released by regulated intramembrane proteolysis (RIP). RIP occurs when an extracytoplasmic signal triggers a concerted proteolytic cascade to transmit information and elicit cellular responses. The membrane-spanning regulatory substrate protein is first cut extracytoplasmically (site-1 protease, S1P), then within the membrane itself (site-2 protease, S2P, Rip1), while cytoplasmic proteases finish degrading the regulatory protein, liberating the sigma factor (By similarity).</text>
</comment>
<comment type="subcellular location">
    <subcellularLocation>
        <location evidence="4">Cell membrane</location>
        <topology evidence="4">Single-pass membrane protein</topology>
    </subcellularLocation>
</comment>
<comment type="domain">
    <text evidence="1">The cytosolic domain interacts with sigma factor SigK.</text>
</comment>
<comment type="similarity">
    <text evidence="4">Belongs to the anti-sigma-K factor family.</text>
</comment>
<protein>
    <recommendedName>
        <fullName>Anti-sigma-K factor RskA</fullName>
    </recommendedName>
    <alternativeName>
        <fullName>Regulator of SigK</fullName>
    </alternativeName>
    <alternativeName>
        <fullName>Sigma-K anti-sigma factor RskA</fullName>
    </alternativeName>
</protein>